<proteinExistence type="inferred from homology"/>
<accession>Q93AR8</accession>
<protein>
    <recommendedName>
        <fullName>Pyrophosphate-energized proton pump 1</fullName>
        <ecNumber>7.1.3.1</ecNumber>
    </recommendedName>
    <alternativeName>
        <fullName>Membrane-bound proton-translocating pyrophosphatase 1</fullName>
    </alternativeName>
    <alternativeName>
        <fullName>Pyrophosphate-energized inorganic pyrophosphatase 1</fullName>
        <shortName>H(+)-PPase 1</shortName>
    </alternativeName>
</protein>
<sequence>AIGSAGLGALVLFAAYSNDLSYFAANGDKYPYFANIGEISFDLSNPYVVAGLIFGGLIPYLFGGIAMTAVGRAAGSIVEEVRRQFKEKPGIMQGKDKPNYGRAVDLLTKAAIREMIVPSLLPVLAPLVVYFGVLLISGSKASAFAALGASLLGVIVNGLFVAISMTSGGGAWDNAKKSFEDGFVDKDGQRHMKGSEAHKASVTGDTVGDPYKDTAGPAVNPAIKI</sequence>
<reference key="1">
    <citation type="submission" date="2001-09" db="EMBL/GenBank/DDBJ databases">
        <title>High prevalence of the H+-proton-pumping inorganic pyrophosphatase gene in alpha proteobacteria and evidence of lateral transfer in its phylogeny.</title>
        <authorList>
            <person name="Jumas-Bilak E."/>
            <person name="Michaux-Charachon S."/>
            <person name="Teyssier C."/>
        </authorList>
    </citation>
    <scope>NUCLEOTIDE SEQUENCE [GENOMIC DNA]</scope>
    <source>
        <strain>ATCC 4279 / DSM 7138 / JCM 20847 / NBRC 13291 / NCIMB 9439 / NRRL B-1091</strain>
    </source>
</reference>
<feature type="chain" id="PRO_0000217019" description="Pyrophosphate-energized proton pump 1">
    <location>
        <begin position="1" status="less than"/>
        <end position="225" status="greater than"/>
    </location>
</feature>
<feature type="transmembrane region" description="Helical" evidence="2">
    <location>
        <begin position="5"/>
        <end position="25"/>
    </location>
</feature>
<feature type="transmembrane region" description="Helical" evidence="2">
    <location>
        <begin position="47"/>
        <end position="67"/>
    </location>
</feature>
<feature type="transmembrane region" description="Helical" evidence="2">
    <location>
        <begin position="116"/>
        <end position="136"/>
    </location>
</feature>
<feature type="transmembrane region" description="Helical" evidence="2">
    <location>
        <begin position="143"/>
        <end position="163"/>
    </location>
</feature>
<feature type="non-terminal residue">
    <location>
        <position position="1"/>
    </location>
</feature>
<feature type="non-terminal residue">
    <location>
        <position position="225"/>
    </location>
</feature>
<gene>
    <name type="primary">hppA1</name>
</gene>
<keyword id="KW-0997">Cell inner membrane</keyword>
<keyword id="KW-1003">Cell membrane</keyword>
<keyword id="KW-0375">Hydrogen ion transport</keyword>
<keyword id="KW-0406">Ion transport</keyword>
<keyword id="KW-0460">Magnesium</keyword>
<keyword id="KW-0472">Membrane</keyword>
<keyword id="KW-1278">Translocase</keyword>
<keyword id="KW-0812">Transmembrane</keyword>
<keyword id="KW-1133">Transmembrane helix</keyword>
<keyword id="KW-0813">Transport</keyword>
<organism>
    <name type="scientific">Mycoplana dimorpha</name>
    <dbReference type="NCBI Taxonomy" id="28320"/>
    <lineage>
        <taxon>Bacteria</taxon>
        <taxon>Pseudomonadati</taxon>
        <taxon>Pseudomonadota</taxon>
        <taxon>Alphaproteobacteria</taxon>
        <taxon>Hyphomicrobiales</taxon>
        <taxon>Rhizobiaceae</taxon>
        <taxon>Mycoplana</taxon>
    </lineage>
</organism>
<dbReference type="EC" id="7.1.3.1"/>
<dbReference type="EMBL" id="AH011173">
    <property type="protein sequence ID" value="AAL18699.1"/>
    <property type="molecule type" value="Genomic_DNA"/>
</dbReference>
<dbReference type="SMR" id="Q93AR8"/>
<dbReference type="GO" id="GO:0005886">
    <property type="term" value="C:plasma membrane"/>
    <property type="evidence" value="ECO:0007669"/>
    <property type="project" value="UniProtKB-SubCell"/>
</dbReference>
<dbReference type="GO" id="GO:0009678">
    <property type="term" value="F:diphosphate hydrolysis-driven proton transmembrane transporter activity"/>
    <property type="evidence" value="ECO:0007669"/>
    <property type="project" value="UniProtKB-EC"/>
</dbReference>
<dbReference type="GO" id="GO:0004427">
    <property type="term" value="F:inorganic diphosphate phosphatase activity"/>
    <property type="evidence" value="ECO:0007669"/>
    <property type="project" value="InterPro"/>
</dbReference>
<dbReference type="InterPro" id="IPR004131">
    <property type="entry name" value="PPase-energised_H-pump"/>
</dbReference>
<dbReference type="PANTHER" id="PTHR31998">
    <property type="entry name" value="K(+)-INSENSITIVE PYROPHOSPHATE-ENERGIZED PROTON PUMP"/>
    <property type="match status" value="1"/>
</dbReference>
<dbReference type="Pfam" id="PF03030">
    <property type="entry name" value="H_PPase"/>
    <property type="match status" value="1"/>
</dbReference>
<name>HPPA1_MYCDI</name>
<evidence type="ECO:0000250" key="1"/>
<evidence type="ECO:0000255" key="2"/>
<evidence type="ECO:0000305" key="3"/>
<comment type="function">
    <text evidence="1">Proton pump that utilizes the energy of pyrophosphate hydrolysis as the driving force for proton movement across the membrane. Generates a proton motive force (By similarity).</text>
</comment>
<comment type="catalytic activity">
    <reaction>
        <text>diphosphate + H2O + H(+)(in) = 2 phosphate + 2 H(+)(out)</text>
        <dbReference type="Rhea" id="RHEA:13973"/>
        <dbReference type="ChEBI" id="CHEBI:15377"/>
        <dbReference type="ChEBI" id="CHEBI:15378"/>
        <dbReference type="ChEBI" id="CHEBI:33019"/>
        <dbReference type="ChEBI" id="CHEBI:43474"/>
        <dbReference type="EC" id="7.1.3.1"/>
    </reaction>
</comment>
<comment type="cofactor">
    <cofactor evidence="1">
        <name>Mg(2+)</name>
        <dbReference type="ChEBI" id="CHEBI:18420"/>
    </cofactor>
</comment>
<comment type="subunit">
    <text evidence="1">Homodimer.</text>
</comment>
<comment type="subcellular location">
    <subcellularLocation>
        <location evidence="1">Cell inner membrane</location>
        <topology evidence="1">Multi-pass membrane protein</topology>
    </subcellularLocation>
</comment>
<comment type="similarity">
    <text evidence="3">Belongs to the H(+)-translocating pyrophosphatase (TC 3.A.10) family.</text>
</comment>